<keyword id="KW-0131">Cell cycle</keyword>
<keyword id="KW-0132">Cell division</keyword>
<keyword id="KW-0133">Cell shape</keyword>
<keyword id="KW-0961">Cell wall biogenesis/degradation</keyword>
<keyword id="KW-0963">Cytoplasm</keyword>
<keyword id="KW-0274">FAD</keyword>
<keyword id="KW-0285">Flavoprotein</keyword>
<keyword id="KW-0521">NADP</keyword>
<keyword id="KW-0560">Oxidoreductase</keyword>
<keyword id="KW-0573">Peptidoglycan synthesis</keyword>
<dbReference type="EC" id="1.3.1.98" evidence="1"/>
<dbReference type="EMBL" id="BX897700">
    <property type="protein sequence ID" value="CAF26363.1"/>
    <property type="status" value="ALT_INIT"/>
    <property type="molecule type" value="Genomic_DNA"/>
</dbReference>
<dbReference type="SMR" id="Q6G126"/>
<dbReference type="KEGG" id="bqu:BQ08840"/>
<dbReference type="eggNOG" id="COG0812">
    <property type="taxonomic scope" value="Bacteria"/>
</dbReference>
<dbReference type="HOGENOM" id="CLU_035304_1_0_5"/>
<dbReference type="UniPathway" id="UPA00219"/>
<dbReference type="Proteomes" id="UP000000597">
    <property type="component" value="Chromosome"/>
</dbReference>
<dbReference type="GO" id="GO:0005829">
    <property type="term" value="C:cytosol"/>
    <property type="evidence" value="ECO:0007669"/>
    <property type="project" value="TreeGrafter"/>
</dbReference>
<dbReference type="GO" id="GO:0071949">
    <property type="term" value="F:FAD binding"/>
    <property type="evidence" value="ECO:0007669"/>
    <property type="project" value="InterPro"/>
</dbReference>
<dbReference type="GO" id="GO:0008762">
    <property type="term" value="F:UDP-N-acetylmuramate dehydrogenase activity"/>
    <property type="evidence" value="ECO:0007669"/>
    <property type="project" value="UniProtKB-UniRule"/>
</dbReference>
<dbReference type="GO" id="GO:0051301">
    <property type="term" value="P:cell division"/>
    <property type="evidence" value="ECO:0007669"/>
    <property type="project" value="UniProtKB-KW"/>
</dbReference>
<dbReference type="GO" id="GO:0071555">
    <property type="term" value="P:cell wall organization"/>
    <property type="evidence" value="ECO:0007669"/>
    <property type="project" value="UniProtKB-KW"/>
</dbReference>
<dbReference type="GO" id="GO:0009252">
    <property type="term" value="P:peptidoglycan biosynthetic process"/>
    <property type="evidence" value="ECO:0007669"/>
    <property type="project" value="UniProtKB-UniRule"/>
</dbReference>
<dbReference type="GO" id="GO:0008360">
    <property type="term" value="P:regulation of cell shape"/>
    <property type="evidence" value="ECO:0007669"/>
    <property type="project" value="UniProtKB-KW"/>
</dbReference>
<dbReference type="Gene3D" id="3.30.465.10">
    <property type="match status" value="1"/>
</dbReference>
<dbReference type="Gene3D" id="3.90.78.10">
    <property type="entry name" value="UDP-N-acetylenolpyruvoylglucosamine reductase, C-terminal domain"/>
    <property type="match status" value="1"/>
</dbReference>
<dbReference type="Gene3D" id="3.30.43.10">
    <property type="entry name" value="Uridine Diphospho-n-acetylenolpyruvylglucosamine Reductase, domain 2"/>
    <property type="match status" value="1"/>
</dbReference>
<dbReference type="HAMAP" id="MF_00037">
    <property type="entry name" value="MurB"/>
    <property type="match status" value="1"/>
</dbReference>
<dbReference type="InterPro" id="IPR016166">
    <property type="entry name" value="FAD-bd_PCMH"/>
</dbReference>
<dbReference type="InterPro" id="IPR036318">
    <property type="entry name" value="FAD-bd_PCMH-like_sf"/>
</dbReference>
<dbReference type="InterPro" id="IPR016167">
    <property type="entry name" value="FAD-bd_PCMH_sub1"/>
</dbReference>
<dbReference type="InterPro" id="IPR016169">
    <property type="entry name" value="FAD-bd_PCMH_sub2"/>
</dbReference>
<dbReference type="InterPro" id="IPR003170">
    <property type="entry name" value="MurB"/>
</dbReference>
<dbReference type="InterPro" id="IPR011601">
    <property type="entry name" value="MurB_C"/>
</dbReference>
<dbReference type="InterPro" id="IPR036635">
    <property type="entry name" value="MurB_C_sf"/>
</dbReference>
<dbReference type="InterPro" id="IPR006094">
    <property type="entry name" value="Oxid_FAD_bind_N"/>
</dbReference>
<dbReference type="NCBIfam" id="NF010480">
    <property type="entry name" value="PRK13905.1"/>
    <property type="match status" value="1"/>
</dbReference>
<dbReference type="PANTHER" id="PTHR21071">
    <property type="entry name" value="UDP-N-ACETYLENOLPYRUVOYLGLUCOSAMINE REDUCTASE"/>
    <property type="match status" value="1"/>
</dbReference>
<dbReference type="PANTHER" id="PTHR21071:SF4">
    <property type="entry name" value="UDP-N-ACETYLENOLPYRUVOYLGLUCOSAMINE REDUCTASE"/>
    <property type="match status" value="1"/>
</dbReference>
<dbReference type="Pfam" id="PF01565">
    <property type="entry name" value="FAD_binding_4"/>
    <property type="match status" value="1"/>
</dbReference>
<dbReference type="Pfam" id="PF02873">
    <property type="entry name" value="MurB_C"/>
    <property type="match status" value="1"/>
</dbReference>
<dbReference type="SUPFAM" id="SSF56176">
    <property type="entry name" value="FAD-binding/transporter-associated domain-like"/>
    <property type="match status" value="1"/>
</dbReference>
<dbReference type="SUPFAM" id="SSF56194">
    <property type="entry name" value="Uridine diphospho-N-Acetylenolpyruvylglucosamine reductase, MurB, C-terminal domain"/>
    <property type="match status" value="1"/>
</dbReference>
<dbReference type="PROSITE" id="PS51387">
    <property type="entry name" value="FAD_PCMH"/>
    <property type="match status" value="1"/>
</dbReference>
<evidence type="ECO:0000255" key="1">
    <source>
        <dbReference type="HAMAP-Rule" id="MF_00037"/>
    </source>
</evidence>
<evidence type="ECO:0000305" key="2"/>
<protein>
    <recommendedName>
        <fullName evidence="1">UDP-N-acetylenolpyruvoylglucosamine reductase</fullName>
        <ecNumber evidence="1">1.3.1.98</ecNumber>
    </recommendedName>
    <alternativeName>
        <fullName evidence="1">UDP-N-acetylmuramate dehydrogenase</fullName>
    </alternativeName>
</protein>
<comment type="function">
    <text evidence="1">Cell wall formation.</text>
</comment>
<comment type="catalytic activity">
    <reaction evidence="1">
        <text>UDP-N-acetyl-alpha-D-muramate + NADP(+) = UDP-N-acetyl-3-O-(1-carboxyvinyl)-alpha-D-glucosamine + NADPH + H(+)</text>
        <dbReference type="Rhea" id="RHEA:12248"/>
        <dbReference type="ChEBI" id="CHEBI:15378"/>
        <dbReference type="ChEBI" id="CHEBI:57783"/>
        <dbReference type="ChEBI" id="CHEBI:58349"/>
        <dbReference type="ChEBI" id="CHEBI:68483"/>
        <dbReference type="ChEBI" id="CHEBI:70757"/>
        <dbReference type="EC" id="1.3.1.98"/>
    </reaction>
</comment>
<comment type="cofactor">
    <cofactor evidence="1">
        <name>FAD</name>
        <dbReference type="ChEBI" id="CHEBI:57692"/>
    </cofactor>
</comment>
<comment type="pathway">
    <text evidence="1">Cell wall biogenesis; peptidoglycan biosynthesis.</text>
</comment>
<comment type="subcellular location">
    <subcellularLocation>
        <location evidence="1">Cytoplasm</location>
    </subcellularLocation>
</comment>
<comment type="similarity">
    <text evidence="1">Belongs to the MurB family.</text>
</comment>
<comment type="sequence caution" evidence="2">
    <conflict type="erroneous initiation">
        <sequence resource="EMBL-CDS" id="CAF26363"/>
    </conflict>
</comment>
<gene>
    <name evidence="1" type="primary">murB</name>
    <name type="ordered locus">BQ08840</name>
</gene>
<organism>
    <name type="scientific">Bartonella quintana (strain Toulouse)</name>
    <name type="common">Rochalimaea quintana</name>
    <dbReference type="NCBI Taxonomy" id="283165"/>
    <lineage>
        <taxon>Bacteria</taxon>
        <taxon>Pseudomonadati</taxon>
        <taxon>Pseudomonadota</taxon>
        <taxon>Alphaproteobacteria</taxon>
        <taxon>Hyphomicrobiales</taxon>
        <taxon>Bartonellaceae</taxon>
        <taxon>Bartonella</taxon>
    </lineage>
</organism>
<sequence length="321" mass="34846">MNFQLIDGEALLAQLQPALGDIKGKLTPNVDMRKVTWFRTGGLAELFYQPADEADLALFLKTLPEFISVTIVGIGSNLLVRDGGIPGVVIRLSAKGFGQVQQVSPKRFLVGAATAGKHLAAAALEAEITGFHFYHGIPGGLGGALKMNAGANGIETAARVVEVYALDRKGRHHILSLADMHYSYRHCAIPKDFIFTAALLEGEPGNRDDIRAAMDEVALHRETVQPVREKTGGSTFRNPENISAWRVIDEAGCRGLQIGGAQMSEMHCNFMINTGQATGYDLEALGETVRARVFAHSAHLLQWEIQRIGQFEQSRIVPSFG</sequence>
<feature type="chain" id="PRO_0000224666" description="UDP-N-acetylenolpyruvoylglucosamine reductase">
    <location>
        <begin position="1"/>
        <end position="321"/>
    </location>
</feature>
<feature type="domain" description="FAD-binding PCMH-type" evidence="1">
    <location>
        <begin position="39"/>
        <end position="205"/>
    </location>
</feature>
<feature type="active site" evidence="1">
    <location>
        <position position="185"/>
    </location>
</feature>
<feature type="active site" description="Proton donor" evidence="1">
    <location>
        <position position="234"/>
    </location>
</feature>
<feature type="active site" evidence="1">
    <location>
        <position position="304"/>
    </location>
</feature>
<accession>Q6G126</accession>
<name>MURB_BARQU</name>
<reference key="1">
    <citation type="journal article" date="2004" name="Proc. Natl. Acad. Sci. U.S.A.">
        <title>The louse-borne human pathogen Bartonella quintana is a genomic derivative of the zoonotic agent Bartonella henselae.</title>
        <authorList>
            <person name="Alsmark U.C.M."/>
            <person name="Frank A.C."/>
            <person name="Karlberg E.O."/>
            <person name="Legault B.-A."/>
            <person name="Ardell D.H."/>
            <person name="Canbaeck B."/>
            <person name="Eriksson A.-S."/>
            <person name="Naeslund A.K."/>
            <person name="Handley S.A."/>
            <person name="Huvet M."/>
            <person name="La Scola B."/>
            <person name="Holmberg M."/>
            <person name="Andersson S.G.E."/>
        </authorList>
    </citation>
    <scope>NUCLEOTIDE SEQUENCE [LARGE SCALE GENOMIC DNA]</scope>
    <source>
        <strain>Toulouse</strain>
    </source>
</reference>
<proteinExistence type="inferred from homology"/>